<organism>
    <name type="scientific">Shewanella woodyi (strain ATCC 51908 / MS32)</name>
    <dbReference type="NCBI Taxonomy" id="392500"/>
    <lineage>
        <taxon>Bacteria</taxon>
        <taxon>Pseudomonadati</taxon>
        <taxon>Pseudomonadota</taxon>
        <taxon>Gammaproteobacteria</taxon>
        <taxon>Alteromonadales</taxon>
        <taxon>Shewanellaceae</taxon>
        <taxon>Shewanella</taxon>
    </lineage>
</organism>
<feature type="chain" id="PRO_0000387126" description="Ribosomal RNA small subunit methyltransferase H">
    <location>
        <begin position="1"/>
        <end position="313"/>
    </location>
</feature>
<feature type="binding site" evidence="1">
    <location>
        <begin position="35"/>
        <end position="37"/>
    </location>
    <ligand>
        <name>S-adenosyl-L-methionine</name>
        <dbReference type="ChEBI" id="CHEBI:59789"/>
    </ligand>
</feature>
<feature type="binding site" evidence="1">
    <location>
        <position position="55"/>
    </location>
    <ligand>
        <name>S-adenosyl-L-methionine</name>
        <dbReference type="ChEBI" id="CHEBI:59789"/>
    </ligand>
</feature>
<feature type="binding site" evidence="1">
    <location>
        <position position="80"/>
    </location>
    <ligand>
        <name>S-adenosyl-L-methionine</name>
        <dbReference type="ChEBI" id="CHEBI:59789"/>
    </ligand>
</feature>
<feature type="binding site" evidence="1">
    <location>
        <position position="102"/>
    </location>
    <ligand>
        <name>S-adenosyl-L-methionine</name>
        <dbReference type="ChEBI" id="CHEBI:59789"/>
    </ligand>
</feature>
<feature type="binding site" evidence="1">
    <location>
        <position position="109"/>
    </location>
    <ligand>
        <name>S-adenosyl-L-methionine</name>
        <dbReference type="ChEBI" id="CHEBI:59789"/>
    </ligand>
</feature>
<gene>
    <name evidence="1" type="primary">rsmH</name>
    <name type="synonym">mraW</name>
    <name type="ordered locus">Swoo_4541</name>
</gene>
<reference key="1">
    <citation type="submission" date="2008-02" db="EMBL/GenBank/DDBJ databases">
        <title>Complete sequence of Shewanella woodyi ATCC 51908.</title>
        <authorList>
            <consortium name="US DOE Joint Genome Institute"/>
            <person name="Copeland A."/>
            <person name="Lucas S."/>
            <person name="Lapidus A."/>
            <person name="Glavina del Rio T."/>
            <person name="Dalin E."/>
            <person name="Tice H."/>
            <person name="Bruce D."/>
            <person name="Goodwin L."/>
            <person name="Pitluck S."/>
            <person name="Sims D."/>
            <person name="Brettin T."/>
            <person name="Detter J.C."/>
            <person name="Han C."/>
            <person name="Kuske C.R."/>
            <person name="Schmutz J."/>
            <person name="Larimer F."/>
            <person name="Land M."/>
            <person name="Hauser L."/>
            <person name="Kyrpides N."/>
            <person name="Lykidis A."/>
            <person name="Zhao J.-S."/>
            <person name="Richardson P."/>
        </authorList>
    </citation>
    <scope>NUCLEOTIDE SEQUENCE [LARGE SCALE GENOMIC DNA]</scope>
    <source>
        <strain>ATCC 51908 / MS32</strain>
    </source>
</reference>
<name>RSMH_SHEWM</name>
<evidence type="ECO:0000255" key="1">
    <source>
        <dbReference type="HAMAP-Rule" id="MF_01007"/>
    </source>
</evidence>
<comment type="function">
    <text evidence="1">Specifically methylates the N4 position of cytidine in position 1402 (C1402) of 16S rRNA.</text>
</comment>
<comment type="catalytic activity">
    <reaction evidence="1">
        <text>cytidine(1402) in 16S rRNA + S-adenosyl-L-methionine = N(4)-methylcytidine(1402) in 16S rRNA + S-adenosyl-L-homocysteine + H(+)</text>
        <dbReference type="Rhea" id="RHEA:42928"/>
        <dbReference type="Rhea" id="RHEA-COMP:10286"/>
        <dbReference type="Rhea" id="RHEA-COMP:10287"/>
        <dbReference type="ChEBI" id="CHEBI:15378"/>
        <dbReference type="ChEBI" id="CHEBI:57856"/>
        <dbReference type="ChEBI" id="CHEBI:59789"/>
        <dbReference type="ChEBI" id="CHEBI:74506"/>
        <dbReference type="ChEBI" id="CHEBI:82748"/>
        <dbReference type="EC" id="2.1.1.199"/>
    </reaction>
</comment>
<comment type="subcellular location">
    <subcellularLocation>
        <location evidence="1">Cytoplasm</location>
    </subcellularLocation>
</comment>
<comment type="similarity">
    <text evidence="1">Belongs to the methyltransferase superfamily. RsmH family.</text>
</comment>
<sequence>MSQEFAHLSVLLTETVAGLNIKEDGIYIDGTFGRGGHSREVLKHLGENGRLIAIDRDPQAIEAAKQFADDARFSIVHGGFGQLATYVEELGLKGKIDGVLLDFGVSSPQLDDAERGFSFLRDGPLDMRMDNSQGETAADWLARAEVEDMAWVFKTYGEEKNSRHIARCIAADREKTPFLRTKELADLIARISKSKERNKHPATRVFQAIRIYINSELEQIDQALEGALTVLAPQGRLSVISFHSLEDRMVKRFIRRHSQGESVPHGLPITEAEINKTRLLKGVGKAIKPSDEEIERNTRARSSVLRVAQRLEH</sequence>
<proteinExistence type="inferred from homology"/>
<dbReference type="EC" id="2.1.1.199" evidence="1"/>
<dbReference type="EMBL" id="CP000961">
    <property type="protein sequence ID" value="ACA88791.1"/>
    <property type="molecule type" value="Genomic_DNA"/>
</dbReference>
<dbReference type="RefSeq" id="WP_012327117.1">
    <property type="nucleotide sequence ID" value="NC_010506.1"/>
</dbReference>
<dbReference type="SMR" id="B1KKY5"/>
<dbReference type="STRING" id="392500.Swoo_4541"/>
<dbReference type="KEGG" id="swd:Swoo_4541"/>
<dbReference type="eggNOG" id="COG0275">
    <property type="taxonomic scope" value="Bacteria"/>
</dbReference>
<dbReference type="HOGENOM" id="CLU_038422_2_0_6"/>
<dbReference type="Proteomes" id="UP000002168">
    <property type="component" value="Chromosome"/>
</dbReference>
<dbReference type="GO" id="GO:0005737">
    <property type="term" value="C:cytoplasm"/>
    <property type="evidence" value="ECO:0007669"/>
    <property type="project" value="UniProtKB-SubCell"/>
</dbReference>
<dbReference type="GO" id="GO:0071424">
    <property type="term" value="F:rRNA (cytosine-N4-)-methyltransferase activity"/>
    <property type="evidence" value="ECO:0007669"/>
    <property type="project" value="UniProtKB-UniRule"/>
</dbReference>
<dbReference type="GO" id="GO:0070475">
    <property type="term" value="P:rRNA base methylation"/>
    <property type="evidence" value="ECO:0007669"/>
    <property type="project" value="UniProtKB-UniRule"/>
</dbReference>
<dbReference type="FunFam" id="1.10.150.170:FF:000001">
    <property type="entry name" value="Ribosomal RNA small subunit methyltransferase H"/>
    <property type="match status" value="1"/>
</dbReference>
<dbReference type="Gene3D" id="1.10.150.170">
    <property type="entry name" value="Putative methyltransferase TM0872, insert domain"/>
    <property type="match status" value="1"/>
</dbReference>
<dbReference type="Gene3D" id="3.40.50.150">
    <property type="entry name" value="Vaccinia Virus protein VP39"/>
    <property type="match status" value="1"/>
</dbReference>
<dbReference type="HAMAP" id="MF_01007">
    <property type="entry name" value="16SrRNA_methyltr_H"/>
    <property type="match status" value="1"/>
</dbReference>
<dbReference type="InterPro" id="IPR002903">
    <property type="entry name" value="RsmH"/>
</dbReference>
<dbReference type="InterPro" id="IPR023397">
    <property type="entry name" value="SAM-dep_MeTrfase_MraW_recog"/>
</dbReference>
<dbReference type="InterPro" id="IPR029063">
    <property type="entry name" value="SAM-dependent_MTases_sf"/>
</dbReference>
<dbReference type="NCBIfam" id="TIGR00006">
    <property type="entry name" value="16S rRNA (cytosine(1402)-N(4))-methyltransferase RsmH"/>
    <property type="match status" value="1"/>
</dbReference>
<dbReference type="PANTHER" id="PTHR11265:SF0">
    <property type="entry name" value="12S RRNA N4-METHYLCYTIDINE METHYLTRANSFERASE"/>
    <property type="match status" value="1"/>
</dbReference>
<dbReference type="PANTHER" id="PTHR11265">
    <property type="entry name" value="S-ADENOSYL-METHYLTRANSFERASE MRAW"/>
    <property type="match status" value="1"/>
</dbReference>
<dbReference type="Pfam" id="PF01795">
    <property type="entry name" value="Methyltransf_5"/>
    <property type="match status" value="1"/>
</dbReference>
<dbReference type="PIRSF" id="PIRSF004486">
    <property type="entry name" value="MraW"/>
    <property type="match status" value="1"/>
</dbReference>
<dbReference type="SUPFAM" id="SSF81799">
    <property type="entry name" value="Putative methyltransferase TM0872, insert domain"/>
    <property type="match status" value="1"/>
</dbReference>
<dbReference type="SUPFAM" id="SSF53335">
    <property type="entry name" value="S-adenosyl-L-methionine-dependent methyltransferases"/>
    <property type="match status" value="1"/>
</dbReference>
<keyword id="KW-0963">Cytoplasm</keyword>
<keyword id="KW-0489">Methyltransferase</keyword>
<keyword id="KW-1185">Reference proteome</keyword>
<keyword id="KW-0698">rRNA processing</keyword>
<keyword id="KW-0949">S-adenosyl-L-methionine</keyword>
<keyword id="KW-0808">Transferase</keyword>
<protein>
    <recommendedName>
        <fullName evidence="1">Ribosomal RNA small subunit methyltransferase H</fullName>
        <ecNumber evidence="1">2.1.1.199</ecNumber>
    </recommendedName>
    <alternativeName>
        <fullName evidence="1">16S rRNA m(4)C1402 methyltransferase</fullName>
    </alternativeName>
    <alternativeName>
        <fullName evidence="1">rRNA (cytosine-N(4)-)-methyltransferase RsmH</fullName>
    </alternativeName>
</protein>
<accession>B1KKY5</accession>